<evidence type="ECO:0000255" key="1">
    <source>
        <dbReference type="HAMAP-Rule" id="MF_00032"/>
    </source>
</evidence>
<feature type="chain" id="PRO_1000002595" description="Translation initiation factor 6">
    <location>
        <begin position="1"/>
        <end position="225"/>
    </location>
</feature>
<organism>
    <name type="scientific">Hyperthermus butylicus (strain DSM 5456 / JCM 9403 / PLM1-5)</name>
    <dbReference type="NCBI Taxonomy" id="415426"/>
    <lineage>
        <taxon>Archaea</taxon>
        <taxon>Thermoproteota</taxon>
        <taxon>Thermoprotei</taxon>
        <taxon>Desulfurococcales</taxon>
        <taxon>Pyrodictiaceae</taxon>
        <taxon>Hyperthermus</taxon>
    </lineage>
</organism>
<proteinExistence type="inferred from homology"/>
<protein>
    <recommendedName>
        <fullName evidence="1">Translation initiation factor 6</fullName>
        <shortName evidence="1">aIF-6</shortName>
    </recommendedName>
</protein>
<dbReference type="EMBL" id="CP000493">
    <property type="protein sequence ID" value="ABM81418.1"/>
    <property type="molecule type" value="Genomic_DNA"/>
</dbReference>
<dbReference type="RefSeq" id="WP_011822736.1">
    <property type="nucleotide sequence ID" value="NC_008818.1"/>
</dbReference>
<dbReference type="SMR" id="A2BN57"/>
<dbReference type="STRING" id="415426.Hbut_1599"/>
<dbReference type="EnsemblBacteria" id="ABM81418">
    <property type="protein sequence ID" value="ABM81418"/>
    <property type="gene ID" value="Hbut_1599"/>
</dbReference>
<dbReference type="GeneID" id="4782004"/>
<dbReference type="KEGG" id="hbu:Hbut_1599"/>
<dbReference type="eggNOG" id="arCOG04176">
    <property type="taxonomic scope" value="Archaea"/>
</dbReference>
<dbReference type="HOGENOM" id="CLU_071894_1_0_2"/>
<dbReference type="OrthoDB" id="33582at2157"/>
<dbReference type="Proteomes" id="UP000002593">
    <property type="component" value="Chromosome"/>
</dbReference>
<dbReference type="GO" id="GO:0043022">
    <property type="term" value="F:ribosome binding"/>
    <property type="evidence" value="ECO:0007669"/>
    <property type="project" value="InterPro"/>
</dbReference>
<dbReference type="GO" id="GO:0003743">
    <property type="term" value="F:translation initiation factor activity"/>
    <property type="evidence" value="ECO:0007669"/>
    <property type="project" value="UniProtKB-UniRule"/>
</dbReference>
<dbReference type="GO" id="GO:0042256">
    <property type="term" value="P:cytosolic ribosome assembly"/>
    <property type="evidence" value="ECO:0007669"/>
    <property type="project" value="InterPro"/>
</dbReference>
<dbReference type="Gene3D" id="3.75.10.10">
    <property type="entry name" value="L-arginine/glycine Amidinotransferase, Chain A"/>
    <property type="match status" value="1"/>
</dbReference>
<dbReference type="HAMAP" id="MF_00032">
    <property type="entry name" value="eIF_6"/>
    <property type="match status" value="1"/>
</dbReference>
<dbReference type="InterPro" id="IPR002769">
    <property type="entry name" value="eIF6"/>
</dbReference>
<dbReference type="NCBIfam" id="TIGR00323">
    <property type="entry name" value="eIF-6"/>
    <property type="match status" value="1"/>
</dbReference>
<dbReference type="NCBIfam" id="NF003135">
    <property type="entry name" value="PRK04046.3-3"/>
    <property type="match status" value="1"/>
</dbReference>
<dbReference type="PANTHER" id="PTHR10784">
    <property type="entry name" value="TRANSLATION INITIATION FACTOR 6"/>
    <property type="match status" value="1"/>
</dbReference>
<dbReference type="Pfam" id="PF01912">
    <property type="entry name" value="eIF-6"/>
    <property type="match status" value="1"/>
</dbReference>
<dbReference type="PIRSF" id="PIRSF006413">
    <property type="entry name" value="IF-6"/>
    <property type="match status" value="1"/>
</dbReference>
<dbReference type="SMART" id="SM00654">
    <property type="entry name" value="eIF6"/>
    <property type="match status" value="1"/>
</dbReference>
<dbReference type="SUPFAM" id="SSF55909">
    <property type="entry name" value="Pentein"/>
    <property type="match status" value="1"/>
</dbReference>
<keyword id="KW-0396">Initiation factor</keyword>
<keyword id="KW-0648">Protein biosynthesis</keyword>
<keyword id="KW-1185">Reference proteome</keyword>
<reference key="1">
    <citation type="journal article" date="2007" name="Archaea">
        <title>The genome of Hyperthermus butylicus: a sulfur-reducing, peptide fermenting, neutrophilic Crenarchaeote growing up to 108 degrees C.</title>
        <authorList>
            <person name="Bruegger K."/>
            <person name="Chen L."/>
            <person name="Stark M."/>
            <person name="Zibat A."/>
            <person name="Redder P."/>
            <person name="Ruepp A."/>
            <person name="Awayez M."/>
            <person name="She Q."/>
            <person name="Garrett R.A."/>
            <person name="Klenk H.-P."/>
        </authorList>
    </citation>
    <scope>NUCLEOTIDE SEQUENCE [LARGE SCALE GENOMIC DNA]</scope>
    <source>
        <strain>DSM 5456 / JCM 9403 / PLM1-5</strain>
    </source>
</reference>
<gene>
    <name evidence="1" type="primary">eif6</name>
    <name type="ordered locus">Hbut_1599</name>
</gene>
<comment type="function">
    <text evidence="1">Binds to the 50S ribosomal subunit and prevents its association with the 30S ribosomal subunit to form the 70S initiation complex.</text>
</comment>
<comment type="similarity">
    <text evidence="1">Belongs to the eIF-6 family.</text>
</comment>
<sequence>MIEYLNVHGNPNIGVYIYANNKIALVPPTLTEKDKKKIEETLGVEVIETKIADMIINGVMIAGNDNGLLLPRIVKPEELDYLREHIGDKVRLEILEVRQTALGNLIAANNRGALVSPLIDKAILDKIKSVLGVETIYQRHLANIPTVGSMIVVTNRGGVVHPGVSDDEIRILNSVFGVEFTTATVNFGLYFVKAGLVANDHGALVGDETTGPELMRIQQALRLRG</sequence>
<name>IF6_HYPBU</name>
<accession>A2BN57</accession>